<evidence type="ECO:0000255" key="1">
    <source>
        <dbReference type="HAMAP-Rule" id="MF_00600"/>
    </source>
</evidence>
<dbReference type="EC" id="5.6.1.7" evidence="1"/>
<dbReference type="EMBL" id="CP000469">
    <property type="protein sequence ID" value="ABK49789.1"/>
    <property type="molecule type" value="Genomic_DNA"/>
</dbReference>
<dbReference type="RefSeq" id="WP_011718348.1">
    <property type="nucleotide sequence ID" value="NC_008577.1"/>
</dbReference>
<dbReference type="SMR" id="A0L170"/>
<dbReference type="STRING" id="94122.Shewana3_3567"/>
<dbReference type="GeneID" id="94729489"/>
<dbReference type="KEGG" id="shn:Shewana3_3567"/>
<dbReference type="eggNOG" id="COG0459">
    <property type="taxonomic scope" value="Bacteria"/>
</dbReference>
<dbReference type="HOGENOM" id="CLU_016503_3_0_6"/>
<dbReference type="OrthoDB" id="9766614at2"/>
<dbReference type="Proteomes" id="UP000002589">
    <property type="component" value="Chromosome"/>
</dbReference>
<dbReference type="GO" id="GO:0005737">
    <property type="term" value="C:cytoplasm"/>
    <property type="evidence" value="ECO:0007669"/>
    <property type="project" value="UniProtKB-SubCell"/>
</dbReference>
<dbReference type="GO" id="GO:0005524">
    <property type="term" value="F:ATP binding"/>
    <property type="evidence" value="ECO:0007669"/>
    <property type="project" value="UniProtKB-UniRule"/>
</dbReference>
<dbReference type="GO" id="GO:0140662">
    <property type="term" value="F:ATP-dependent protein folding chaperone"/>
    <property type="evidence" value="ECO:0007669"/>
    <property type="project" value="InterPro"/>
</dbReference>
<dbReference type="GO" id="GO:0016853">
    <property type="term" value="F:isomerase activity"/>
    <property type="evidence" value="ECO:0007669"/>
    <property type="project" value="UniProtKB-KW"/>
</dbReference>
<dbReference type="GO" id="GO:0051082">
    <property type="term" value="F:unfolded protein binding"/>
    <property type="evidence" value="ECO:0007669"/>
    <property type="project" value="UniProtKB-UniRule"/>
</dbReference>
<dbReference type="GO" id="GO:0042026">
    <property type="term" value="P:protein refolding"/>
    <property type="evidence" value="ECO:0007669"/>
    <property type="project" value="UniProtKB-UniRule"/>
</dbReference>
<dbReference type="CDD" id="cd03344">
    <property type="entry name" value="GroEL"/>
    <property type="match status" value="1"/>
</dbReference>
<dbReference type="FunFam" id="1.10.560.10:FF:000001">
    <property type="entry name" value="60 kDa chaperonin"/>
    <property type="match status" value="1"/>
</dbReference>
<dbReference type="FunFam" id="3.50.7.10:FF:000001">
    <property type="entry name" value="60 kDa chaperonin"/>
    <property type="match status" value="1"/>
</dbReference>
<dbReference type="Gene3D" id="3.50.7.10">
    <property type="entry name" value="GroEL"/>
    <property type="match status" value="1"/>
</dbReference>
<dbReference type="Gene3D" id="1.10.560.10">
    <property type="entry name" value="GroEL-like equatorial domain"/>
    <property type="match status" value="1"/>
</dbReference>
<dbReference type="Gene3D" id="3.30.260.10">
    <property type="entry name" value="TCP-1-like chaperonin intermediate domain"/>
    <property type="match status" value="1"/>
</dbReference>
<dbReference type="HAMAP" id="MF_00600">
    <property type="entry name" value="CH60"/>
    <property type="match status" value="1"/>
</dbReference>
<dbReference type="InterPro" id="IPR018370">
    <property type="entry name" value="Chaperonin_Cpn60_CS"/>
</dbReference>
<dbReference type="InterPro" id="IPR001844">
    <property type="entry name" value="Cpn60/GroEL"/>
</dbReference>
<dbReference type="InterPro" id="IPR002423">
    <property type="entry name" value="Cpn60/GroEL/TCP-1"/>
</dbReference>
<dbReference type="InterPro" id="IPR027409">
    <property type="entry name" value="GroEL-like_apical_dom_sf"/>
</dbReference>
<dbReference type="InterPro" id="IPR027413">
    <property type="entry name" value="GROEL-like_equatorial_sf"/>
</dbReference>
<dbReference type="InterPro" id="IPR027410">
    <property type="entry name" value="TCP-1-like_intermed_sf"/>
</dbReference>
<dbReference type="NCBIfam" id="TIGR02348">
    <property type="entry name" value="GroEL"/>
    <property type="match status" value="1"/>
</dbReference>
<dbReference type="NCBIfam" id="NF000592">
    <property type="entry name" value="PRK00013.1"/>
    <property type="match status" value="1"/>
</dbReference>
<dbReference type="NCBIfam" id="NF009487">
    <property type="entry name" value="PRK12849.1"/>
    <property type="match status" value="1"/>
</dbReference>
<dbReference type="NCBIfam" id="NF009488">
    <property type="entry name" value="PRK12850.1"/>
    <property type="match status" value="1"/>
</dbReference>
<dbReference type="NCBIfam" id="NF009489">
    <property type="entry name" value="PRK12851.1"/>
    <property type="match status" value="1"/>
</dbReference>
<dbReference type="PANTHER" id="PTHR45633">
    <property type="entry name" value="60 KDA HEAT SHOCK PROTEIN, MITOCHONDRIAL"/>
    <property type="match status" value="1"/>
</dbReference>
<dbReference type="Pfam" id="PF00118">
    <property type="entry name" value="Cpn60_TCP1"/>
    <property type="match status" value="1"/>
</dbReference>
<dbReference type="PRINTS" id="PR00298">
    <property type="entry name" value="CHAPERONIN60"/>
</dbReference>
<dbReference type="SUPFAM" id="SSF52029">
    <property type="entry name" value="GroEL apical domain-like"/>
    <property type="match status" value="1"/>
</dbReference>
<dbReference type="SUPFAM" id="SSF48592">
    <property type="entry name" value="GroEL equatorial domain-like"/>
    <property type="match status" value="1"/>
</dbReference>
<dbReference type="SUPFAM" id="SSF54849">
    <property type="entry name" value="GroEL-intermediate domain like"/>
    <property type="match status" value="1"/>
</dbReference>
<dbReference type="PROSITE" id="PS00296">
    <property type="entry name" value="CHAPERONINS_CPN60"/>
    <property type="match status" value="1"/>
</dbReference>
<comment type="function">
    <text evidence="1">Together with its co-chaperonin GroES, plays an essential role in assisting protein folding. The GroEL-GroES system forms a nano-cage that allows encapsulation of the non-native substrate proteins and provides a physical environment optimized to promote and accelerate protein folding.</text>
</comment>
<comment type="catalytic activity">
    <reaction evidence="1">
        <text>ATP + H2O + a folded polypeptide = ADP + phosphate + an unfolded polypeptide.</text>
        <dbReference type="EC" id="5.6.1.7"/>
    </reaction>
</comment>
<comment type="subunit">
    <text evidence="1">Forms a cylinder of 14 subunits composed of two heptameric rings stacked back-to-back. Interacts with the co-chaperonin GroES.</text>
</comment>
<comment type="subcellular location">
    <subcellularLocation>
        <location evidence="1">Cytoplasm</location>
    </subcellularLocation>
</comment>
<comment type="similarity">
    <text evidence="1">Belongs to the chaperonin (HSP60) family.</text>
</comment>
<protein>
    <recommendedName>
        <fullName evidence="1">Chaperonin GroEL</fullName>
        <ecNumber evidence="1">5.6.1.7</ecNumber>
    </recommendedName>
    <alternativeName>
        <fullName evidence="1">60 kDa chaperonin</fullName>
    </alternativeName>
    <alternativeName>
        <fullName evidence="1">Chaperonin-60</fullName>
        <shortName evidence="1">Cpn60</shortName>
    </alternativeName>
</protein>
<gene>
    <name evidence="1" type="primary">groEL</name>
    <name evidence="1" type="synonym">groL</name>
    <name type="ordered locus">Shewana3_3567</name>
</gene>
<sequence>MAAKEVVFGNDARVKMLAGVNILANAVKVTLGPKGRNVVLDKSFGSPLITKDGVSVAKEIELEDKFENMGAQMVKEVASKANDAAGDGTTTATVLAQAIVTEGLKAVAAGMNPMDLKRGIDKAVAAAVIELKNLSQDCADSKAIAQVGTISANSDESIGQIIATAMEKVGKEGVITVEEGQALENELDVVEGMQFDRGYLSPYFINKPETGSVELDHPFVLLVDKKISNIRELLPILEGLAKTGKPLLIVAEDVEGEALATLVVNNMRGIVKVAAVKAPGFGDRRKAMLQDVAILTGGTVIAEEIGLELEKATLEDLGTAKRVVITKDNTTIIDGNGEQAQIEARVSQIKQQIEESTSDYDKEKLQERMAKLAGGVAVIKVGAATEVEMKEKKARVEDALHATRAAVEEGVVPGGGVALVRVASKIADVEVANEDQKHGVVIALRAMEAPLRQIATNAGEEASVVANTVKNGSGNYGYNAGNDTYGDMLEMGILDPTKVTRSALQFAASIAGLMITTEAMVAELPKADAPDMGGMGGMGGMGGMM</sequence>
<name>CH60_SHESA</name>
<feature type="chain" id="PRO_0000332079" description="Chaperonin GroEL">
    <location>
        <begin position="1"/>
        <end position="545"/>
    </location>
</feature>
<feature type="binding site" evidence="1">
    <location>
        <begin position="30"/>
        <end position="33"/>
    </location>
    <ligand>
        <name>ATP</name>
        <dbReference type="ChEBI" id="CHEBI:30616"/>
    </ligand>
</feature>
<feature type="binding site" evidence="1">
    <location>
        <position position="51"/>
    </location>
    <ligand>
        <name>ATP</name>
        <dbReference type="ChEBI" id="CHEBI:30616"/>
    </ligand>
</feature>
<feature type="binding site" evidence="1">
    <location>
        <begin position="87"/>
        <end position="91"/>
    </location>
    <ligand>
        <name>ATP</name>
        <dbReference type="ChEBI" id="CHEBI:30616"/>
    </ligand>
</feature>
<feature type="binding site" evidence="1">
    <location>
        <position position="415"/>
    </location>
    <ligand>
        <name>ATP</name>
        <dbReference type="ChEBI" id="CHEBI:30616"/>
    </ligand>
</feature>
<feature type="binding site" evidence="1">
    <location>
        <position position="495"/>
    </location>
    <ligand>
        <name>ATP</name>
        <dbReference type="ChEBI" id="CHEBI:30616"/>
    </ligand>
</feature>
<proteinExistence type="inferred from homology"/>
<organism>
    <name type="scientific">Shewanella sp. (strain ANA-3)</name>
    <dbReference type="NCBI Taxonomy" id="94122"/>
    <lineage>
        <taxon>Bacteria</taxon>
        <taxon>Pseudomonadati</taxon>
        <taxon>Pseudomonadota</taxon>
        <taxon>Gammaproteobacteria</taxon>
        <taxon>Alteromonadales</taxon>
        <taxon>Shewanellaceae</taxon>
        <taxon>Shewanella</taxon>
    </lineage>
</organism>
<accession>A0L170</accession>
<keyword id="KW-0067">ATP-binding</keyword>
<keyword id="KW-0143">Chaperone</keyword>
<keyword id="KW-0963">Cytoplasm</keyword>
<keyword id="KW-0413">Isomerase</keyword>
<keyword id="KW-0547">Nucleotide-binding</keyword>
<reference key="1">
    <citation type="submission" date="2006-09" db="EMBL/GenBank/DDBJ databases">
        <title>Complete sequence of chromosome 1 of Shewanella sp. ANA-3.</title>
        <authorList>
            <person name="Copeland A."/>
            <person name="Lucas S."/>
            <person name="Lapidus A."/>
            <person name="Barry K."/>
            <person name="Detter J.C."/>
            <person name="Glavina del Rio T."/>
            <person name="Hammon N."/>
            <person name="Israni S."/>
            <person name="Dalin E."/>
            <person name="Tice H."/>
            <person name="Pitluck S."/>
            <person name="Chertkov O."/>
            <person name="Brettin T."/>
            <person name="Bruce D."/>
            <person name="Han C."/>
            <person name="Tapia R."/>
            <person name="Gilna P."/>
            <person name="Schmutz J."/>
            <person name="Larimer F."/>
            <person name="Land M."/>
            <person name="Hauser L."/>
            <person name="Kyrpides N."/>
            <person name="Kim E."/>
            <person name="Newman D."/>
            <person name="Salticov C."/>
            <person name="Konstantinidis K."/>
            <person name="Klappenback J."/>
            <person name="Tiedje J."/>
            <person name="Richardson P."/>
        </authorList>
    </citation>
    <scope>NUCLEOTIDE SEQUENCE [LARGE SCALE GENOMIC DNA]</scope>
    <source>
        <strain>ANA-3</strain>
    </source>
</reference>